<name>METXS_BURL3</name>
<accession>Q39BX2</accession>
<reference key="1">
    <citation type="submission" date="2005-10" db="EMBL/GenBank/DDBJ databases">
        <title>Complete sequence of chromosome 1 of Burkholderia sp. 383.</title>
        <authorList>
            <consortium name="US DOE Joint Genome Institute"/>
            <person name="Copeland A."/>
            <person name="Lucas S."/>
            <person name="Lapidus A."/>
            <person name="Barry K."/>
            <person name="Detter J.C."/>
            <person name="Glavina T."/>
            <person name="Hammon N."/>
            <person name="Israni S."/>
            <person name="Pitluck S."/>
            <person name="Chain P."/>
            <person name="Malfatti S."/>
            <person name="Shin M."/>
            <person name="Vergez L."/>
            <person name="Schmutz J."/>
            <person name="Larimer F."/>
            <person name="Land M."/>
            <person name="Kyrpides N."/>
            <person name="Lykidis A."/>
            <person name="Richardson P."/>
        </authorList>
    </citation>
    <scope>NUCLEOTIDE SEQUENCE [LARGE SCALE GENOMIC DNA]</scope>
    <source>
        <strain>ATCC 17760 / DSM 23089 / LMG 22485 / NCIMB 9086 / R18194 / 383</strain>
    </source>
</reference>
<gene>
    <name evidence="1" type="primary">metXS</name>
    <name type="ordered locus">Bcep18194_A6450</name>
</gene>
<protein>
    <recommendedName>
        <fullName evidence="1">Homoserine O-succinyltransferase</fullName>
        <shortName evidence="1">HST</shortName>
        <ecNumber evidence="1">2.3.1.46</ecNumber>
    </recommendedName>
    <alternativeName>
        <fullName evidence="1">Homoserine transsuccinylase</fullName>
        <shortName evidence="1">HTS</shortName>
    </alternativeName>
</protein>
<comment type="function">
    <text evidence="1">Transfers a succinyl group from succinyl-CoA to L-homoserine, forming succinyl-L-homoserine.</text>
</comment>
<comment type="catalytic activity">
    <reaction evidence="1">
        <text>L-homoserine + succinyl-CoA = O-succinyl-L-homoserine + CoA</text>
        <dbReference type="Rhea" id="RHEA:22008"/>
        <dbReference type="ChEBI" id="CHEBI:57287"/>
        <dbReference type="ChEBI" id="CHEBI:57292"/>
        <dbReference type="ChEBI" id="CHEBI:57476"/>
        <dbReference type="ChEBI" id="CHEBI:57661"/>
        <dbReference type="EC" id="2.3.1.46"/>
    </reaction>
</comment>
<comment type="pathway">
    <text evidence="1">Amino-acid biosynthesis; L-methionine biosynthesis via de novo pathway; O-succinyl-L-homoserine from L-homoserine: step 1/1.</text>
</comment>
<comment type="subunit">
    <text evidence="1">Homodimer.</text>
</comment>
<comment type="subcellular location">
    <subcellularLocation>
        <location evidence="1">Cytoplasm</location>
    </subcellularLocation>
</comment>
<comment type="similarity">
    <text evidence="1">Belongs to the AB hydrolase superfamily. MetX family.</text>
</comment>
<keyword id="KW-0012">Acyltransferase</keyword>
<keyword id="KW-0028">Amino-acid biosynthesis</keyword>
<keyword id="KW-0963">Cytoplasm</keyword>
<keyword id="KW-0486">Methionine biosynthesis</keyword>
<keyword id="KW-0808">Transferase</keyword>
<dbReference type="EC" id="2.3.1.46" evidence="1"/>
<dbReference type="EMBL" id="CP000151">
    <property type="protein sequence ID" value="ABB10044.1"/>
    <property type="molecule type" value="Genomic_DNA"/>
</dbReference>
<dbReference type="RefSeq" id="WP_011353548.1">
    <property type="nucleotide sequence ID" value="NC_007510.1"/>
</dbReference>
<dbReference type="SMR" id="Q39BX2"/>
<dbReference type="ESTHER" id="burca-metx">
    <property type="family name" value="Homoserine_transacetylase"/>
</dbReference>
<dbReference type="GeneID" id="45096320"/>
<dbReference type="KEGG" id="bur:Bcep18194_A6450"/>
<dbReference type="PATRIC" id="fig|482957.22.peg.3481"/>
<dbReference type="HOGENOM" id="CLU_028760_1_2_4"/>
<dbReference type="UniPathway" id="UPA00051">
    <property type="reaction ID" value="UER00075"/>
</dbReference>
<dbReference type="Proteomes" id="UP000002705">
    <property type="component" value="Chromosome 1"/>
</dbReference>
<dbReference type="GO" id="GO:0005737">
    <property type="term" value="C:cytoplasm"/>
    <property type="evidence" value="ECO:0007669"/>
    <property type="project" value="UniProtKB-SubCell"/>
</dbReference>
<dbReference type="GO" id="GO:0004414">
    <property type="term" value="F:homoserine O-acetyltransferase activity"/>
    <property type="evidence" value="ECO:0007669"/>
    <property type="project" value="TreeGrafter"/>
</dbReference>
<dbReference type="GO" id="GO:0008899">
    <property type="term" value="F:homoserine O-succinyltransferase activity"/>
    <property type="evidence" value="ECO:0007669"/>
    <property type="project" value="UniProtKB-UniRule"/>
</dbReference>
<dbReference type="GO" id="GO:0009092">
    <property type="term" value="P:homoserine metabolic process"/>
    <property type="evidence" value="ECO:0007669"/>
    <property type="project" value="TreeGrafter"/>
</dbReference>
<dbReference type="GO" id="GO:0009086">
    <property type="term" value="P:methionine biosynthetic process"/>
    <property type="evidence" value="ECO:0007669"/>
    <property type="project" value="UniProtKB-UniRule"/>
</dbReference>
<dbReference type="FunFam" id="1.10.1740.110:FF:000001">
    <property type="entry name" value="Homoserine O-acetyltransferase"/>
    <property type="match status" value="1"/>
</dbReference>
<dbReference type="Gene3D" id="1.10.1740.110">
    <property type="match status" value="1"/>
</dbReference>
<dbReference type="Gene3D" id="3.40.50.1820">
    <property type="entry name" value="alpha/beta hydrolase"/>
    <property type="match status" value="1"/>
</dbReference>
<dbReference type="HAMAP" id="MF_00296">
    <property type="entry name" value="MetX_acyltransf"/>
    <property type="match status" value="1"/>
</dbReference>
<dbReference type="InterPro" id="IPR000073">
    <property type="entry name" value="AB_hydrolase_1"/>
</dbReference>
<dbReference type="InterPro" id="IPR029058">
    <property type="entry name" value="AB_hydrolase_fold"/>
</dbReference>
<dbReference type="InterPro" id="IPR008220">
    <property type="entry name" value="HAT_MetX-like"/>
</dbReference>
<dbReference type="NCBIfam" id="TIGR01392">
    <property type="entry name" value="homoserO_Ac_trn"/>
    <property type="match status" value="1"/>
</dbReference>
<dbReference type="NCBIfam" id="NF001209">
    <property type="entry name" value="PRK00175.1"/>
    <property type="match status" value="1"/>
</dbReference>
<dbReference type="PANTHER" id="PTHR32268">
    <property type="entry name" value="HOMOSERINE O-ACETYLTRANSFERASE"/>
    <property type="match status" value="1"/>
</dbReference>
<dbReference type="PANTHER" id="PTHR32268:SF11">
    <property type="entry name" value="HOMOSERINE O-ACETYLTRANSFERASE"/>
    <property type="match status" value="1"/>
</dbReference>
<dbReference type="Pfam" id="PF00561">
    <property type="entry name" value="Abhydrolase_1"/>
    <property type="match status" value="1"/>
</dbReference>
<dbReference type="PIRSF" id="PIRSF000443">
    <property type="entry name" value="Homoser_Ac_trans"/>
    <property type="match status" value="1"/>
</dbReference>
<dbReference type="SUPFAM" id="SSF53474">
    <property type="entry name" value="alpha/beta-Hydrolases"/>
    <property type="match status" value="1"/>
</dbReference>
<organism>
    <name type="scientific">Burkholderia lata (strain ATCC 17760 / DSM 23089 / LMG 22485 / NCIMB 9086 / R18194 / 383)</name>
    <dbReference type="NCBI Taxonomy" id="482957"/>
    <lineage>
        <taxon>Bacteria</taxon>
        <taxon>Pseudomonadati</taxon>
        <taxon>Pseudomonadota</taxon>
        <taxon>Betaproteobacteria</taxon>
        <taxon>Burkholderiales</taxon>
        <taxon>Burkholderiaceae</taxon>
        <taxon>Burkholderia</taxon>
        <taxon>Burkholderia cepacia complex</taxon>
    </lineage>
</organism>
<evidence type="ECO:0000255" key="1">
    <source>
        <dbReference type="HAMAP-Rule" id="MF_00296"/>
    </source>
</evidence>
<feature type="chain" id="PRO_0000231865" description="Homoserine O-succinyltransferase">
    <location>
        <begin position="1"/>
        <end position="381"/>
    </location>
</feature>
<feature type="domain" description="AB hydrolase-1" evidence="1">
    <location>
        <begin position="45"/>
        <end position="360"/>
    </location>
</feature>
<feature type="active site" description="Nucleophile" evidence="1">
    <location>
        <position position="151"/>
    </location>
</feature>
<feature type="active site" evidence="1">
    <location>
        <position position="321"/>
    </location>
</feature>
<feature type="active site" evidence="1">
    <location>
        <position position="354"/>
    </location>
</feature>
<feature type="binding site" evidence="1">
    <location>
        <position position="221"/>
    </location>
    <ligand>
        <name>substrate</name>
    </ligand>
</feature>
<feature type="binding site" evidence="1">
    <location>
        <position position="355"/>
    </location>
    <ligand>
        <name>substrate</name>
    </ligand>
</feature>
<feature type="site" description="Important for acyl-CoA specificity" evidence="1">
    <location>
        <position position="323"/>
    </location>
</feature>
<sequence>MESIGIVAPQTMHFAEPLRLQSGSVIGNYQLVVETYGELNAARSNAVLVCHALNASHHVAGVYADDPRSTGWWDNMVGPGKPLDTNRFFVIGVNNLGSCFGSTGPMSADPSTGKPYGASFPVVTVEDWVHAQARVADAFGIERFAAVMGGSLGGMQALAWSLMYPERVAHCIDIASTPKLSAQNIAFNEVARSAILSDPDFHGGDYYAHGVKPKRGLRVARMIGHITYLSDDDMAEKFGRALRRADGALDAYNFSFDVEFEVESYLRYQGDKFADYFDANTYLLITRALDYFDPAKAFDGNLTAALAHTQAKYLIASFSTDWRFAPARSREIVKALLDNKRTVSYAEIDAPHGHDAFLLDDARYHNLIRAYYERIANEVGA</sequence>
<proteinExistence type="inferred from homology"/>